<comment type="function">
    <text evidence="1">A chromatin protein, binds double-stranded DNA without sequence specificity. Constrains negative DNA supercoils.</text>
</comment>
<comment type="subunit">
    <text evidence="1">Monomer.</text>
</comment>
<comment type="subcellular location">
    <subcellularLocation>
        <location evidence="1">Chromosome</location>
    </subcellularLocation>
    <subcellularLocation>
        <location evidence="1">Cytoplasm</location>
    </subcellularLocation>
</comment>
<comment type="PTM">
    <text evidence="1">Methylated at multiple sites, to varying extents.</text>
</comment>
<comment type="similarity">
    <text evidence="1">Belongs to the Cren7 family.</text>
</comment>
<feature type="chain" id="PRO_0000345169" description="Chromatin protein Cren7">
    <location>
        <begin position="1"/>
        <end position="55"/>
    </location>
</feature>
<reference key="1">
    <citation type="journal article" date="2008" name="Genome Biol.">
        <title>A genomic analysis of the archaeal system Ignicoccus hospitalis-Nanoarchaeum equitans.</title>
        <authorList>
            <person name="Podar M."/>
            <person name="Anderson I."/>
            <person name="Makarova K.S."/>
            <person name="Elkins J.G."/>
            <person name="Ivanova N."/>
            <person name="Wall M.A."/>
            <person name="Lykidis A."/>
            <person name="Mavromatis K."/>
            <person name="Sun H."/>
            <person name="Hudson M.E."/>
            <person name="Chen W."/>
            <person name="Deciu C."/>
            <person name="Hutchison D."/>
            <person name="Eads J.R."/>
            <person name="Anderson A."/>
            <person name="Fernandes F."/>
            <person name="Szeto E."/>
            <person name="Lapidus A."/>
            <person name="Kyrpides N.C."/>
            <person name="Saier M.H. Jr."/>
            <person name="Richardson P.M."/>
            <person name="Rachel R."/>
            <person name="Huber H."/>
            <person name="Eisen J.A."/>
            <person name="Koonin E.V."/>
            <person name="Keller M."/>
            <person name="Stetter K.O."/>
        </authorList>
    </citation>
    <scope>NUCLEOTIDE SEQUENCE [LARGE SCALE GENOMIC DNA]</scope>
    <source>
        <strain>KIN4/I / DSM 18386 / JCM 14125</strain>
    </source>
</reference>
<gene>
    <name evidence="1" type="primary">creN7</name>
    <name type="ordered locus">Igni_0039</name>
</gene>
<proteinExistence type="inferred from homology"/>
<dbReference type="EMBL" id="CP000816">
    <property type="protein sequence ID" value="ABU81223.1"/>
    <property type="molecule type" value="Genomic_DNA"/>
</dbReference>
<dbReference type="RefSeq" id="WP_011998075.1">
    <property type="nucleotide sequence ID" value="NC_009776.1"/>
</dbReference>
<dbReference type="SMR" id="A8A8H1"/>
<dbReference type="STRING" id="453591.Igni_0039"/>
<dbReference type="GeneID" id="5562962"/>
<dbReference type="KEGG" id="iho:Igni_0039"/>
<dbReference type="eggNOG" id="arCOG04114">
    <property type="taxonomic scope" value="Archaea"/>
</dbReference>
<dbReference type="HOGENOM" id="CLU_2911298_0_0_2"/>
<dbReference type="OrthoDB" id="38142at2157"/>
<dbReference type="PhylomeDB" id="A8A8H1"/>
<dbReference type="Proteomes" id="UP000000262">
    <property type="component" value="Chromosome"/>
</dbReference>
<dbReference type="GO" id="GO:0005694">
    <property type="term" value="C:chromosome"/>
    <property type="evidence" value="ECO:0007669"/>
    <property type="project" value="UniProtKB-SubCell"/>
</dbReference>
<dbReference type="GO" id="GO:0005737">
    <property type="term" value="C:cytoplasm"/>
    <property type="evidence" value="ECO:0007669"/>
    <property type="project" value="UniProtKB-SubCell"/>
</dbReference>
<dbReference type="GO" id="GO:0003690">
    <property type="term" value="F:double-stranded DNA binding"/>
    <property type="evidence" value="ECO:0007669"/>
    <property type="project" value="UniProtKB-UniRule"/>
</dbReference>
<dbReference type="Gene3D" id="2.30.30.610">
    <property type="entry name" value="Chromatin protein Cren7"/>
    <property type="match status" value="1"/>
</dbReference>
<dbReference type="HAMAP" id="MF_01387">
    <property type="entry name" value="Chromatin_Cren7"/>
    <property type="match status" value="1"/>
</dbReference>
<dbReference type="InterPro" id="IPR038647">
    <property type="entry name" value="Cren7_sf"/>
</dbReference>
<dbReference type="InterPro" id="IPR020906">
    <property type="entry name" value="dsDNA-bd_Cren7"/>
</dbReference>
<dbReference type="Pfam" id="PF11520">
    <property type="entry name" value="Cren7"/>
    <property type="match status" value="1"/>
</dbReference>
<sequence>MPKCPKCGAEVKEPIKTWVLAPKGRKGVIIGLFRCPNGHYFRAKVGEAPPKKEAA</sequence>
<accession>A8A8H1</accession>
<protein>
    <recommendedName>
        <fullName evidence="1">Chromatin protein Cren7</fullName>
    </recommendedName>
</protein>
<keyword id="KW-0158">Chromosome</keyword>
<keyword id="KW-0963">Cytoplasm</keyword>
<keyword id="KW-0238">DNA-binding</keyword>
<keyword id="KW-0488">Methylation</keyword>
<keyword id="KW-1185">Reference proteome</keyword>
<evidence type="ECO:0000255" key="1">
    <source>
        <dbReference type="HAMAP-Rule" id="MF_01387"/>
    </source>
</evidence>
<organism>
    <name type="scientific">Ignicoccus hospitalis (strain KIN4/I / DSM 18386 / JCM 14125)</name>
    <dbReference type="NCBI Taxonomy" id="453591"/>
    <lineage>
        <taxon>Archaea</taxon>
        <taxon>Thermoproteota</taxon>
        <taxon>Thermoprotei</taxon>
        <taxon>Desulfurococcales</taxon>
        <taxon>Desulfurococcaceae</taxon>
        <taxon>Ignicoccus</taxon>
    </lineage>
</organism>
<name>CREN7_IGNH4</name>